<reference key="1">
    <citation type="submission" date="1994-09" db="EMBL/GenBank/DDBJ databases">
        <authorList>
            <person name="Sutton R."/>
            <person name="Ward W.G."/>
            <person name="Raphael K.A."/>
            <person name="Cam G.R."/>
        </authorList>
    </citation>
    <scope>NUCLEOTIDE SEQUENCE [MRNA]</scope>
</reference>
<reference key="2">
    <citation type="journal article" date="1987" name="FEBS Lett.">
        <title>Primary structure of ovine pituitary basic fibroblast growth factor.</title>
        <authorList>
            <person name="Simpson R.J."/>
            <person name="Moritz R.L."/>
            <person name="Lloyd C.J."/>
            <person name="Fabri L.J."/>
            <person name="Nice E.C."/>
            <person name="Rubira M.R."/>
            <person name="Burgess A.W."/>
        </authorList>
    </citation>
    <scope>PROTEIN SEQUENCE OF 9-155</scope>
</reference>
<sequence length="155" mass="17280">MAAGSITTLPALPEDGGSSAFPPGHFKDPKRLYCKNGGFFLRIHPDGRVDGVREKSDPHIKLQLQAEERGVVSIKGVCANRYLAMKEDGRLLASKCVTDECFFFERLESNNYNTYRSRKYSSWYVALKRTGQYKLGPKTGPGQKAILFLPMSAKS</sequence>
<name>FGF2_SHEEP</name>
<proteinExistence type="evidence at protein level"/>
<protein>
    <recommendedName>
        <fullName>Fibroblast growth factor 2</fullName>
        <shortName>FGF-2</shortName>
    </recommendedName>
    <alternativeName>
        <fullName>Basic fibroblast growth factor</fullName>
        <shortName>bFGF</shortName>
    </alternativeName>
    <alternativeName>
        <fullName>Heparin-binding growth factor 2</fullName>
        <shortName>HBGF-2</shortName>
    </alternativeName>
</protein>
<dbReference type="EMBL" id="L36136">
    <property type="protein sequence ID" value="AAA31519.1"/>
    <property type="molecule type" value="mRNA"/>
</dbReference>
<dbReference type="PIR" id="S00185">
    <property type="entry name" value="S00185"/>
</dbReference>
<dbReference type="RefSeq" id="NP_001009769.1">
    <property type="nucleotide sequence ID" value="NM_001009769.1"/>
</dbReference>
<dbReference type="SMR" id="P20003"/>
<dbReference type="Ensembl" id="ENSOART00020071685">
    <property type="protein sequence ID" value="ENSOARP00020048931"/>
    <property type="gene ID" value="ENSOARG00020036121"/>
</dbReference>
<dbReference type="Ensembl" id="ENSOART00025016746">
    <property type="protein sequence ID" value="ENSOARP00025008408"/>
    <property type="gene ID" value="ENSOARG00025010156"/>
</dbReference>
<dbReference type="Ensembl" id="ENSOART00040016326">
    <property type="protein sequence ID" value="ENSOARP00040007974"/>
    <property type="gene ID" value="ENSOARG00040010130"/>
</dbReference>
<dbReference type="Ensembl" id="ENSOART00180042360">
    <property type="protein sequence ID" value="ENSOARP00180021643"/>
    <property type="gene ID" value="ENSOARG00180025589"/>
</dbReference>
<dbReference type="Ensembl" id="ENSOART00185041735">
    <property type="protein sequence ID" value="ENSOARP00185020660"/>
    <property type="gene ID" value="ENSOARG00185025359"/>
</dbReference>
<dbReference type="Ensembl" id="ENSOART00215018157">
    <property type="protein sequence ID" value="ENSOARP00215008970"/>
    <property type="gene ID" value="ENSOARG00215010984"/>
</dbReference>
<dbReference type="Ensembl" id="ENSOART00220070333">
    <property type="protein sequence ID" value="ENSOARP00220038139"/>
    <property type="gene ID" value="ENSOARG00220042240"/>
</dbReference>
<dbReference type="Ensembl" id="ENSOART00225033421">
    <property type="protein sequence ID" value="ENSOARP00225016427"/>
    <property type="gene ID" value="ENSOARG00225020295"/>
</dbReference>
<dbReference type="Ensembl" id="ENSOART00260038592">
    <property type="protein sequence ID" value="ENSOARP00260019429"/>
    <property type="gene ID" value="ENSOARG00260023694"/>
</dbReference>
<dbReference type="GeneID" id="443306"/>
<dbReference type="KEGG" id="oas:443306"/>
<dbReference type="CTD" id="2247"/>
<dbReference type="HOGENOM" id="CLU_081609_5_1_1"/>
<dbReference type="OMA" id="KGVCSNR"/>
<dbReference type="OrthoDB" id="5987799at2759"/>
<dbReference type="Proteomes" id="UP000002356">
    <property type="component" value="Chromosome 17"/>
</dbReference>
<dbReference type="Bgee" id="ENSOARG00000017222">
    <property type="expression patterns" value="Expressed in aortic valve and 51 other cell types or tissues"/>
</dbReference>
<dbReference type="ExpressionAtlas" id="P20003">
    <property type="expression patterns" value="baseline"/>
</dbReference>
<dbReference type="GO" id="GO:0005615">
    <property type="term" value="C:extracellular space"/>
    <property type="evidence" value="ECO:0007669"/>
    <property type="project" value="Ensembl"/>
</dbReference>
<dbReference type="GO" id="GO:0005634">
    <property type="term" value="C:nucleus"/>
    <property type="evidence" value="ECO:0007669"/>
    <property type="project" value="UniProtKB-SubCell"/>
</dbReference>
<dbReference type="GO" id="GO:0042056">
    <property type="term" value="F:chemoattractant activity"/>
    <property type="evidence" value="ECO:0007669"/>
    <property type="project" value="Ensembl"/>
</dbReference>
<dbReference type="GO" id="GO:0019956">
    <property type="term" value="F:chemokine binding"/>
    <property type="evidence" value="ECO:0007669"/>
    <property type="project" value="Ensembl"/>
</dbReference>
<dbReference type="GO" id="GO:0005125">
    <property type="term" value="F:cytokine activity"/>
    <property type="evidence" value="ECO:0007669"/>
    <property type="project" value="Ensembl"/>
</dbReference>
<dbReference type="GO" id="GO:0005104">
    <property type="term" value="F:fibroblast growth factor receptor binding"/>
    <property type="evidence" value="ECO:0007669"/>
    <property type="project" value="Ensembl"/>
</dbReference>
<dbReference type="GO" id="GO:0008083">
    <property type="term" value="F:growth factor activity"/>
    <property type="evidence" value="ECO:0007669"/>
    <property type="project" value="UniProtKB-KW"/>
</dbReference>
<dbReference type="GO" id="GO:0008201">
    <property type="term" value="F:heparin binding"/>
    <property type="evidence" value="ECO:0007669"/>
    <property type="project" value="UniProtKB-KW"/>
</dbReference>
<dbReference type="GO" id="GO:0042802">
    <property type="term" value="F:identical protein binding"/>
    <property type="evidence" value="ECO:0007669"/>
    <property type="project" value="Ensembl"/>
</dbReference>
<dbReference type="GO" id="GO:0005178">
    <property type="term" value="F:integrin binding"/>
    <property type="evidence" value="ECO:0000250"/>
    <property type="project" value="UniProtKB"/>
</dbReference>
<dbReference type="GO" id="GO:0090722">
    <property type="term" value="F:receptor-receptor interaction"/>
    <property type="evidence" value="ECO:0007669"/>
    <property type="project" value="Ensembl"/>
</dbReference>
<dbReference type="GO" id="GO:0001658">
    <property type="term" value="P:branching involved in ureteric bud morphogenesis"/>
    <property type="evidence" value="ECO:0000250"/>
    <property type="project" value="UniProtKB"/>
</dbReference>
<dbReference type="GO" id="GO:0060070">
    <property type="term" value="P:canonical Wnt signaling pathway"/>
    <property type="evidence" value="ECO:0007669"/>
    <property type="project" value="Ensembl"/>
</dbReference>
<dbReference type="GO" id="GO:0002042">
    <property type="term" value="P:cell migration involved in sprouting angiogenesis"/>
    <property type="evidence" value="ECO:0007669"/>
    <property type="project" value="Ensembl"/>
</dbReference>
<dbReference type="GO" id="GO:0021930">
    <property type="term" value="P:cerebellar granule cell precursor proliferation"/>
    <property type="evidence" value="ECO:0007669"/>
    <property type="project" value="Ensembl"/>
</dbReference>
<dbReference type="GO" id="GO:0060591">
    <property type="term" value="P:chondroblast differentiation"/>
    <property type="evidence" value="ECO:0007669"/>
    <property type="project" value="Ensembl"/>
</dbReference>
<dbReference type="GO" id="GO:0060128">
    <property type="term" value="P:corticotropin hormone secreting cell differentiation"/>
    <property type="evidence" value="ECO:0007669"/>
    <property type="project" value="Ensembl"/>
</dbReference>
<dbReference type="GO" id="GO:0001935">
    <property type="term" value="P:endothelial cell proliferation"/>
    <property type="evidence" value="ECO:0007669"/>
    <property type="project" value="Ensembl"/>
</dbReference>
<dbReference type="GO" id="GO:0070371">
    <property type="term" value="P:ERK1 and ERK2 cascade"/>
    <property type="evidence" value="ECO:0007669"/>
    <property type="project" value="Ensembl"/>
</dbReference>
<dbReference type="GO" id="GO:0008543">
    <property type="term" value="P:fibroblast growth factor receptor signaling pathway"/>
    <property type="evidence" value="ECO:0007669"/>
    <property type="project" value="Ensembl"/>
</dbReference>
<dbReference type="GO" id="GO:0010001">
    <property type="term" value="P:glial cell differentiation"/>
    <property type="evidence" value="ECO:0007669"/>
    <property type="project" value="Ensembl"/>
</dbReference>
<dbReference type="GO" id="GO:0014843">
    <property type="term" value="P:growth factor dependent regulation of skeletal muscle satellite cell proliferation"/>
    <property type="evidence" value="ECO:0007669"/>
    <property type="project" value="Ensembl"/>
</dbReference>
<dbReference type="GO" id="GO:0030214">
    <property type="term" value="P:hyaluronan catabolic process"/>
    <property type="evidence" value="ECO:0007669"/>
    <property type="project" value="Ensembl"/>
</dbReference>
<dbReference type="GO" id="GO:0042491">
    <property type="term" value="P:inner ear auditory receptor cell differentiation"/>
    <property type="evidence" value="ECO:0007669"/>
    <property type="project" value="Ensembl"/>
</dbReference>
<dbReference type="GO" id="GO:0030324">
    <property type="term" value="P:lung development"/>
    <property type="evidence" value="ECO:0007669"/>
    <property type="project" value="Ensembl"/>
</dbReference>
<dbReference type="GO" id="GO:1904977">
    <property type="term" value="P:lymphatic endothelial cell migration"/>
    <property type="evidence" value="ECO:0007669"/>
    <property type="project" value="Ensembl"/>
</dbReference>
<dbReference type="GO" id="GO:0060644">
    <property type="term" value="P:mammary gland epithelial cell differentiation"/>
    <property type="evidence" value="ECO:0007669"/>
    <property type="project" value="Ensembl"/>
</dbReference>
<dbReference type="GO" id="GO:0043537">
    <property type="term" value="P:negative regulation of blood vessel endothelial cell migration"/>
    <property type="evidence" value="ECO:0007669"/>
    <property type="project" value="Ensembl"/>
</dbReference>
<dbReference type="GO" id="GO:0010764">
    <property type="term" value="P:negative regulation of fibroblast migration"/>
    <property type="evidence" value="ECO:0007669"/>
    <property type="project" value="Ensembl"/>
</dbReference>
<dbReference type="GO" id="GO:2000647">
    <property type="term" value="P:negative regulation of stem cell proliferation"/>
    <property type="evidence" value="ECO:0007669"/>
    <property type="project" value="Ensembl"/>
</dbReference>
<dbReference type="GO" id="GO:0061045">
    <property type="term" value="P:negative regulation of wound healing"/>
    <property type="evidence" value="ECO:0007669"/>
    <property type="project" value="Ensembl"/>
</dbReference>
<dbReference type="GO" id="GO:0007405">
    <property type="term" value="P:neuroblast proliferation"/>
    <property type="evidence" value="ECO:0007669"/>
    <property type="project" value="Ensembl"/>
</dbReference>
<dbReference type="GO" id="GO:0001759">
    <property type="term" value="P:organ induction"/>
    <property type="evidence" value="ECO:0007669"/>
    <property type="project" value="Ensembl"/>
</dbReference>
<dbReference type="GO" id="GO:0001649">
    <property type="term" value="P:osteoblast differentiation"/>
    <property type="evidence" value="ECO:0007669"/>
    <property type="project" value="Ensembl"/>
</dbReference>
<dbReference type="GO" id="GO:0043491">
    <property type="term" value="P:phosphatidylinositol 3-kinase/protein kinase B signal transduction"/>
    <property type="evidence" value="ECO:0007669"/>
    <property type="project" value="Ensembl"/>
</dbReference>
<dbReference type="GO" id="GO:0045766">
    <property type="term" value="P:positive regulation of angiogenesis"/>
    <property type="evidence" value="ECO:0000250"/>
    <property type="project" value="UniProtKB"/>
</dbReference>
<dbReference type="GO" id="GO:1905555">
    <property type="term" value="P:positive regulation of blood vessel branching"/>
    <property type="evidence" value="ECO:0007669"/>
    <property type="project" value="Ensembl"/>
</dbReference>
<dbReference type="GO" id="GO:0043536">
    <property type="term" value="P:positive regulation of blood vessel endothelial cell migration"/>
    <property type="evidence" value="ECO:0000250"/>
    <property type="project" value="UniProtKB"/>
</dbReference>
<dbReference type="GO" id="GO:0090263">
    <property type="term" value="P:positive regulation of canonical Wnt signaling pathway"/>
    <property type="evidence" value="ECO:0007669"/>
    <property type="project" value="Ensembl"/>
</dbReference>
<dbReference type="GO" id="GO:0060045">
    <property type="term" value="P:positive regulation of cardiac muscle cell proliferation"/>
    <property type="evidence" value="ECO:0007669"/>
    <property type="project" value="Ensembl"/>
</dbReference>
<dbReference type="GO" id="GO:0051781">
    <property type="term" value="P:positive regulation of cell division"/>
    <property type="evidence" value="ECO:0007669"/>
    <property type="project" value="UniProtKB-KW"/>
</dbReference>
<dbReference type="GO" id="GO:0042660">
    <property type="term" value="P:positive regulation of cell fate specification"/>
    <property type="evidence" value="ECO:0007669"/>
    <property type="project" value="Ensembl"/>
</dbReference>
<dbReference type="GO" id="GO:0090050">
    <property type="term" value="P:positive regulation of cell migration involved in sprouting angiogenesis"/>
    <property type="evidence" value="ECO:0000250"/>
    <property type="project" value="UniProtKB"/>
</dbReference>
<dbReference type="GO" id="GO:0021940">
    <property type="term" value="P:positive regulation of cerebellar granule cell precursor proliferation"/>
    <property type="evidence" value="ECO:0007669"/>
    <property type="project" value="Ensembl"/>
</dbReference>
<dbReference type="GO" id="GO:2000573">
    <property type="term" value="P:positive regulation of DNA biosynthetic process"/>
    <property type="evidence" value="ECO:0007669"/>
    <property type="project" value="Ensembl"/>
</dbReference>
<dbReference type="GO" id="GO:2000546">
    <property type="term" value="P:positive regulation of endothelial cell chemotaxis to fibroblast growth factor"/>
    <property type="evidence" value="ECO:0007669"/>
    <property type="project" value="Ensembl"/>
</dbReference>
<dbReference type="GO" id="GO:1905278">
    <property type="term" value="P:positive regulation of epithelial tube formation"/>
    <property type="evidence" value="ECO:0007669"/>
    <property type="project" value="Ensembl"/>
</dbReference>
<dbReference type="GO" id="GO:0070374">
    <property type="term" value="P:positive regulation of ERK1 and ERK2 cascade"/>
    <property type="evidence" value="ECO:0000250"/>
    <property type="project" value="UniProtKB"/>
</dbReference>
<dbReference type="GO" id="GO:0010628">
    <property type="term" value="P:positive regulation of gene expression"/>
    <property type="evidence" value="ECO:0007669"/>
    <property type="project" value="Ensembl"/>
</dbReference>
<dbReference type="GO" id="GO:0045609">
    <property type="term" value="P:positive regulation of inner ear auditory receptor cell differentiation"/>
    <property type="evidence" value="ECO:0007669"/>
    <property type="project" value="Ensembl"/>
</dbReference>
<dbReference type="GO" id="GO:1902748">
    <property type="term" value="P:positive regulation of lens fiber cell differentiation"/>
    <property type="evidence" value="ECO:0000250"/>
    <property type="project" value="UniProtKB"/>
</dbReference>
<dbReference type="GO" id="GO:0002052">
    <property type="term" value="P:positive regulation of neuroblast proliferation"/>
    <property type="evidence" value="ECO:0007669"/>
    <property type="project" value="Ensembl"/>
</dbReference>
<dbReference type="GO" id="GO:1902913">
    <property type="term" value="P:positive regulation of neuroepithelial cell differentiation"/>
    <property type="evidence" value="ECO:0007669"/>
    <property type="project" value="Ensembl"/>
</dbReference>
<dbReference type="GO" id="GO:0045669">
    <property type="term" value="P:positive regulation of osteoblast differentiation"/>
    <property type="evidence" value="ECO:0007669"/>
    <property type="project" value="Ensembl"/>
</dbReference>
<dbReference type="GO" id="GO:0051897">
    <property type="term" value="P:positive regulation of phosphatidylinositol 3-kinase/protein kinase B signal transduction"/>
    <property type="evidence" value="ECO:0007669"/>
    <property type="project" value="Ensembl"/>
</dbReference>
<dbReference type="GO" id="GO:0001934">
    <property type="term" value="P:positive regulation of protein phosphorylation"/>
    <property type="evidence" value="ECO:0000250"/>
    <property type="project" value="UniProtKB"/>
</dbReference>
<dbReference type="GO" id="GO:1903672">
    <property type="term" value="P:positive regulation of sprouting angiogenesis"/>
    <property type="evidence" value="ECO:0000250"/>
    <property type="project" value="UniProtKB"/>
</dbReference>
<dbReference type="GO" id="GO:2000738">
    <property type="term" value="P:positive regulation of stem cell differentiation"/>
    <property type="evidence" value="ECO:0007669"/>
    <property type="project" value="Ensembl"/>
</dbReference>
<dbReference type="GO" id="GO:2000648">
    <property type="term" value="P:positive regulation of stem cell proliferation"/>
    <property type="evidence" value="ECO:0007669"/>
    <property type="project" value="Ensembl"/>
</dbReference>
<dbReference type="GO" id="GO:0045944">
    <property type="term" value="P:positive regulation of transcription by RNA polymerase II"/>
    <property type="evidence" value="ECO:0007669"/>
    <property type="project" value="Ensembl"/>
</dbReference>
<dbReference type="GO" id="GO:1904707">
    <property type="term" value="P:positive regulation of vascular associated smooth muscle cell proliferation"/>
    <property type="evidence" value="ECO:0007669"/>
    <property type="project" value="Ensembl"/>
</dbReference>
<dbReference type="GO" id="GO:1905564">
    <property type="term" value="P:positive regulation of vascular endothelial cell proliferation"/>
    <property type="evidence" value="ECO:0007669"/>
    <property type="project" value="Ensembl"/>
</dbReference>
<dbReference type="GO" id="GO:0051726">
    <property type="term" value="P:regulation of cell cycle"/>
    <property type="evidence" value="ECO:0007669"/>
    <property type="project" value="Ensembl"/>
</dbReference>
<dbReference type="GO" id="GO:0046668">
    <property type="term" value="P:regulation of retinal cell programmed cell death"/>
    <property type="evidence" value="ECO:0007669"/>
    <property type="project" value="Ensembl"/>
</dbReference>
<dbReference type="GO" id="GO:0051209">
    <property type="term" value="P:release of sequestered calcium ion into cytosol"/>
    <property type="evidence" value="ECO:0007669"/>
    <property type="project" value="Ensembl"/>
</dbReference>
<dbReference type="GO" id="GO:0048678">
    <property type="term" value="P:response to axon injury"/>
    <property type="evidence" value="ECO:0007669"/>
    <property type="project" value="Ensembl"/>
</dbReference>
<dbReference type="GO" id="GO:0048864">
    <property type="term" value="P:stem cell development"/>
    <property type="evidence" value="ECO:0007669"/>
    <property type="project" value="Ensembl"/>
</dbReference>
<dbReference type="GO" id="GO:0072089">
    <property type="term" value="P:stem cell proliferation"/>
    <property type="evidence" value="ECO:0007669"/>
    <property type="project" value="Ensembl"/>
</dbReference>
<dbReference type="GO" id="GO:0021762">
    <property type="term" value="P:substantia nigra development"/>
    <property type="evidence" value="ECO:0007669"/>
    <property type="project" value="Ensembl"/>
</dbReference>
<dbReference type="GO" id="GO:0060129">
    <property type="term" value="P:thyroid-stimulating hormone-secreting cell differentiation"/>
    <property type="evidence" value="ECO:0007669"/>
    <property type="project" value="Ensembl"/>
</dbReference>
<dbReference type="GO" id="GO:0006366">
    <property type="term" value="P:transcription by RNA polymerase II"/>
    <property type="evidence" value="ECO:0007669"/>
    <property type="project" value="Ensembl"/>
</dbReference>
<dbReference type="GO" id="GO:0042060">
    <property type="term" value="P:wound healing"/>
    <property type="evidence" value="ECO:0007669"/>
    <property type="project" value="Ensembl"/>
</dbReference>
<dbReference type="CDD" id="cd23314">
    <property type="entry name" value="beta-trefoil_FGF2"/>
    <property type="match status" value="1"/>
</dbReference>
<dbReference type="FunFam" id="2.80.10.50:FF:000020">
    <property type="entry name" value="Fibroblast growth factor 1"/>
    <property type="match status" value="1"/>
</dbReference>
<dbReference type="Gene3D" id="2.80.10.50">
    <property type="match status" value="1"/>
</dbReference>
<dbReference type="InterPro" id="IPR002209">
    <property type="entry name" value="Fibroblast_GF_fam"/>
</dbReference>
<dbReference type="InterPro" id="IPR008996">
    <property type="entry name" value="IL1/FGF"/>
</dbReference>
<dbReference type="PANTHER" id="PTHR11486">
    <property type="entry name" value="FIBROBLAST GROWTH FACTOR"/>
    <property type="match status" value="1"/>
</dbReference>
<dbReference type="Pfam" id="PF00167">
    <property type="entry name" value="FGF"/>
    <property type="match status" value="1"/>
</dbReference>
<dbReference type="PRINTS" id="PR00263">
    <property type="entry name" value="HBGFFGF"/>
</dbReference>
<dbReference type="PRINTS" id="PR00262">
    <property type="entry name" value="IL1HBGF"/>
</dbReference>
<dbReference type="SMART" id="SM00442">
    <property type="entry name" value="FGF"/>
    <property type="match status" value="1"/>
</dbReference>
<dbReference type="SUPFAM" id="SSF50353">
    <property type="entry name" value="Cytokine"/>
    <property type="match status" value="1"/>
</dbReference>
<dbReference type="PROSITE" id="PS00247">
    <property type="entry name" value="HBGF_FGF"/>
    <property type="match status" value="1"/>
</dbReference>
<comment type="function">
    <text evidence="2">Acts as a ligand for FGFR1, FGFR2, FGFR3 and FGFR4 (By similarity). Also acts as an integrin ligand which is required for FGF2 signaling (By similarity). Binds to integrin ITGAV:ITGB3 (By similarity). Plays an important role in the regulation of cell survival, cell division, cell differentiation and cell migration (By similarity). Functions as a potent mitogen in vitro (By similarity). Can induce angiogenesis (By similarity). Mediates phosphorylation of ERK1/2 and thereby promotes retinal lens fiber differentiation (By similarity).</text>
</comment>
<comment type="subunit">
    <text evidence="2 3 4">Monomer. Homodimer. Interacts with FGFR1, FGFR2, FGFR3 and FGFR4. Affinity between fibroblast growth factors (FGFs) and their receptors is increased by heparan sulfate glycosaminoglycans that function as coreceptors. Interacts with CSPG4, FGFBP1 and TEC. Found in a complex with FGFBP1, FGF1 and FGF2. Interacts with FGFBP3. Interacts with integrin ITGAV:ITGB3; the interaction is required for FGF2 signaling. Interacts with SNORC (via the extracellular domain). Interacts with glypican GPC3 (By similarity).</text>
</comment>
<comment type="subcellular location">
    <subcellularLocation>
        <location evidence="2">Secreted</location>
    </subcellularLocation>
    <subcellularLocation>
        <location evidence="2">Nucleus</location>
    </subcellularLocation>
    <text evidence="2">Exported from cells by an endoplasmic reticulum (ER)/Golgi-independent mechanism (By similarity). Unconventional secretion of FGF2 occurs by direct translocation across the plasma membrane (By similarity). Binding of exogenous FGF2 to FGFR facilitates endocytosis followed by translocation of FGF2 across endosomal membrane into the cytosol (By similarity). Nuclear import from the cytosol requires the classical nuclear import machinery, involving proteins KPNA1 and KPNB1, as well as CEP57 (By similarity).</text>
</comment>
<comment type="PTM">
    <text evidence="1">Phosphorylation at Tyr-82 regulates FGF2 unconventional secretion.</text>
</comment>
<comment type="similarity">
    <text evidence="7">Belongs to the heparin-binding growth factors family.</text>
</comment>
<feature type="propeptide" id="PRO_0000008940">
    <location>
        <begin position="1"/>
        <end position="9"/>
    </location>
</feature>
<feature type="chain" id="PRO_0000008941" description="Fibroblast growth factor 2">
    <location>
        <begin position="10"/>
        <end position="155"/>
    </location>
</feature>
<feature type="region of interest" description="Disordered" evidence="6">
    <location>
        <begin position="1"/>
        <end position="20"/>
    </location>
</feature>
<feature type="region of interest" description="Heparin-binding" evidence="1">
    <location>
        <begin position="128"/>
        <end position="144"/>
    </location>
</feature>
<feature type="short sequence motif" description="Cell attachment site; atypical" evidence="5">
    <location>
        <begin position="46"/>
        <end position="48"/>
    </location>
</feature>
<feature type="short sequence motif" description="Cell attachment site; atypical" evidence="5">
    <location>
        <begin position="88"/>
        <end position="90"/>
    </location>
</feature>
<feature type="binding site" evidence="1">
    <location>
        <position position="36"/>
    </location>
    <ligand>
        <name>heparin</name>
        <dbReference type="ChEBI" id="CHEBI:28304"/>
    </ligand>
</feature>
<feature type="site" description="Important for interaction with integrin" evidence="2">
    <location>
        <position position="128"/>
    </location>
</feature>
<feature type="site" description="Important for interaction with integrin" evidence="2">
    <location>
        <position position="129"/>
    </location>
</feature>
<feature type="site" description="Important for interaction with integrin" evidence="2">
    <location>
        <position position="134"/>
    </location>
</feature>
<feature type="modified residue" description="Phosphotyrosine; by TEC" evidence="2">
    <location>
        <position position="82"/>
    </location>
</feature>
<feature type="cross-link" description="Glycyl lysine isopeptide (Lys-Gly) (interchain with G-Cter in SUMO1)" evidence="2">
    <location>
        <position position="95"/>
    </location>
</feature>
<accession>P20003</accession>
<organism>
    <name type="scientific">Ovis aries</name>
    <name type="common">Sheep</name>
    <dbReference type="NCBI Taxonomy" id="9940"/>
    <lineage>
        <taxon>Eukaryota</taxon>
        <taxon>Metazoa</taxon>
        <taxon>Chordata</taxon>
        <taxon>Craniata</taxon>
        <taxon>Vertebrata</taxon>
        <taxon>Euteleostomi</taxon>
        <taxon>Mammalia</taxon>
        <taxon>Eutheria</taxon>
        <taxon>Laurasiatheria</taxon>
        <taxon>Artiodactyla</taxon>
        <taxon>Ruminantia</taxon>
        <taxon>Pecora</taxon>
        <taxon>Bovidae</taxon>
        <taxon>Caprinae</taxon>
        <taxon>Ovis</taxon>
    </lineage>
</organism>
<evidence type="ECO:0000250" key="1"/>
<evidence type="ECO:0000250" key="2">
    <source>
        <dbReference type="UniProtKB" id="P09038"/>
    </source>
</evidence>
<evidence type="ECO:0000250" key="3">
    <source>
        <dbReference type="UniProtKB" id="P13109"/>
    </source>
</evidence>
<evidence type="ECO:0000250" key="4">
    <source>
        <dbReference type="UniProtKB" id="P15655"/>
    </source>
</evidence>
<evidence type="ECO:0000255" key="5"/>
<evidence type="ECO:0000256" key="6">
    <source>
        <dbReference type="SAM" id="MobiDB-lite"/>
    </source>
</evidence>
<evidence type="ECO:0000305" key="7"/>
<keyword id="KW-0037">Angiogenesis</keyword>
<keyword id="KW-0217">Developmental protein</keyword>
<keyword id="KW-0221">Differentiation</keyword>
<keyword id="KW-0903">Direct protein sequencing</keyword>
<keyword id="KW-0339">Growth factor</keyword>
<keyword id="KW-0358">Heparin-binding</keyword>
<keyword id="KW-1017">Isopeptide bond</keyword>
<keyword id="KW-0497">Mitogen</keyword>
<keyword id="KW-0539">Nucleus</keyword>
<keyword id="KW-0597">Phosphoprotein</keyword>
<keyword id="KW-1185">Reference proteome</keyword>
<keyword id="KW-0964">Secreted</keyword>
<keyword id="KW-0832">Ubl conjugation</keyword>
<gene>
    <name type="primary">FGF2</name>
</gene>